<comment type="function">
    <text evidence="1">Catalyzes the ATP-dependent phosphorylation of L-homoserine to L-homoserine phosphate.</text>
</comment>
<comment type="catalytic activity">
    <reaction evidence="1">
        <text>L-homoserine + ATP = O-phospho-L-homoserine + ADP + H(+)</text>
        <dbReference type="Rhea" id="RHEA:13985"/>
        <dbReference type="ChEBI" id="CHEBI:15378"/>
        <dbReference type="ChEBI" id="CHEBI:30616"/>
        <dbReference type="ChEBI" id="CHEBI:57476"/>
        <dbReference type="ChEBI" id="CHEBI:57590"/>
        <dbReference type="ChEBI" id="CHEBI:456216"/>
        <dbReference type="EC" id="2.7.1.39"/>
    </reaction>
</comment>
<comment type="pathway">
    <text evidence="1">Amino-acid biosynthesis; L-threonine biosynthesis; L-threonine from L-aspartate: step 4/5.</text>
</comment>
<comment type="subcellular location">
    <subcellularLocation>
        <location evidence="1">Cytoplasm</location>
    </subcellularLocation>
</comment>
<comment type="similarity">
    <text evidence="1">Belongs to the GHMP kinase family. Homoserine kinase subfamily.</text>
</comment>
<proteinExistence type="inferred from homology"/>
<protein>
    <recommendedName>
        <fullName evidence="1">Homoserine kinase</fullName>
        <shortName evidence="1">HK</shortName>
        <shortName evidence="1">HSK</shortName>
        <ecNumber evidence="1">2.7.1.39</ecNumber>
    </recommendedName>
</protein>
<dbReference type="EC" id="2.7.1.39" evidence="1"/>
<dbReference type="EMBL" id="AM180088">
    <property type="protein sequence ID" value="CAJ53419.2"/>
    <property type="molecule type" value="Genomic_DNA"/>
</dbReference>
<dbReference type="RefSeq" id="WP_014556925.1">
    <property type="nucleotide sequence ID" value="NC_008212.1"/>
</dbReference>
<dbReference type="SMR" id="Q18F42"/>
<dbReference type="STRING" id="362976.HQ_3322A"/>
<dbReference type="GeneID" id="4194769"/>
<dbReference type="KEGG" id="hwa:HQ_3322A"/>
<dbReference type="eggNOG" id="arCOG01027">
    <property type="taxonomic scope" value="Archaea"/>
</dbReference>
<dbReference type="HOGENOM" id="CLU_041243_1_1_2"/>
<dbReference type="UniPathway" id="UPA00050">
    <property type="reaction ID" value="UER00064"/>
</dbReference>
<dbReference type="Proteomes" id="UP000001975">
    <property type="component" value="Chromosome"/>
</dbReference>
<dbReference type="GO" id="GO:0005737">
    <property type="term" value="C:cytoplasm"/>
    <property type="evidence" value="ECO:0007669"/>
    <property type="project" value="UniProtKB-SubCell"/>
</dbReference>
<dbReference type="GO" id="GO:0005524">
    <property type="term" value="F:ATP binding"/>
    <property type="evidence" value="ECO:0007669"/>
    <property type="project" value="UniProtKB-UniRule"/>
</dbReference>
<dbReference type="GO" id="GO:0004413">
    <property type="term" value="F:homoserine kinase activity"/>
    <property type="evidence" value="ECO:0007669"/>
    <property type="project" value="UniProtKB-UniRule"/>
</dbReference>
<dbReference type="GO" id="GO:0009088">
    <property type="term" value="P:threonine biosynthetic process"/>
    <property type="evidence" value="ECO:0007669"/>
    <property type="project" value="UniProtKB-UniRule"/>
</dbReference>
<dbReference type="Gene3D" id="3.30.230.10">
    <property type="match status" value="1"/>
</dbReference>
<dbReference type="Gene3D" id="3.30.70.890">
    <property type="entry name" value="GHMP kinase, C-terminal domain"/>
    <property type="match status" value="1"/>
</dbReference>
<dbReference type="HAMAP" id="MF_00384">
    <property type="entry name" value="Homoser_kinase"/>
    <property type="match status" value="1"/>
</dbReference>
<dbReference type="InterPro" id="IPR013750">
    <property type="entry name" value="GHMP_kinase_C_dom"/>
</dbReference>
<dbReference type="InterPro" id="IPR036554">
    <property type="entry name" value="GHMP_kinase_C_sf"/>
</dbReference>
<dbReference type="InterPro" id="IPR006204">
    <property type="entry name" value="GHMP_kinase_N_dom"/>
</dbReference>
<dbReference type="InterPro" id="IPR000870">
    <property type="entry name" value="Homoserine_kinase"/>
</dbReference>
<dbReference type="InterPro" id="IPR020568">
    <property type="entry name" value="Ribosomal_Su5_D2-typ_SF"/>
</dbReference>
<dbReference type="InterPro" id="IPR014721">
    <property type="entry name" value="Ribsml_uS5_D2-typ_fold_subgr"/>
</dbReference>
<dbReference type="NCBIfam" id="NF002288">
    <property type="entry name" value="PRK01212.1-4"/>
    <property type="match status" value="1"/>
</dbReference>
<dbReference type="NCBIfam" id="TIGR00191">
    <property type="entry name" value="thrB"/>
    <property type="match status" value="1"/>
</dbReference>
<dbReference type="PANTHER" id="PTHR20861:SF1">
    <property type="entry name" value="HOMOSERINE KINASE"/>
    <property type="match status" value="1"/>
</dbReference>
<dbReference type="PANTHER" id="PTHR20861">
    <property type="entry name" value="HOMOSERINE/4-DIPHOSPHOCYTIDYL-2-C-METHYL-D-ERYTHRITOL KINASE"/>
    <property type="match status" value="1"/>
</dbReference>
<dbReference type="Pfam" id="PF08544">
    <property type="entry name" value="GHMP_kinases_C"/>
    <property type="match status" value="1"/>
</dbReference>
<dbReference type="Pfam" id="PF00288">
    <property type="entry name" value="GHMP_kinases_N"/>
    <property type="match status" value="1"/>
</dbReference>
<dbReference type="PIRSF" id="PIRSF000676">
    <property type="entry name" value="Homoser_kin"/>
    <property type="match status" value="1"/>
</dbReference>
<dbReference type="PRINTS" id="PR00958">
    <property type="entry name" value="HOMSERKINASE"/>
</dbReference>
<dbReference type="SUPFAM" id="SSF55060">
    <property type="entry name" value="GHMP Kinase, C-terminal domain"/>
    <property type="match status" value="1"/>
</dbReference>
<dbReference type="SUPFAM" id="SSF54211">
    <property type="entry name" value="Ribosomal protein S5 domain 2-like"/>
    <property type="match status" value="1"/>
</dbReference>
<gene>
    <name evidence="1" type="primary">thrB</name>
    <name type="ordered locus">HQ_3322A</name>
</gene>
<feature type="chain" id="PRO_1000080122" description="Homoserine kinase">
    <location>
        <begin position="1"/>
        <end position="291"/>
    </location>
</feature>
<feature type="binding site" evidence="1">
    <location>
        <begin position="80"/>
        <end position="90"/>
    </location>
    <ligand>
        <name>ATP</name>
        <dbReference type="ChEBI" id="CHEBI:30616"/>
    </ligand>
</feature>
<accession>Q18F42</accession>
<evidence type="ECO:0000255" key="1">
    <source>
        <dbReference type="HAMAP-Rule" id="MF_00384"/>
    </source>
</evidence>
<sequence>METVRAPATSANLGSGFDVFGVALDRPADIVRVERADKTTIEVTGVGSQYIPEDPHSNVVGAVAEALDAPAQIQIDKGVRPSSGLGSSAASAAAAAVALNGLYDRGLSRTELVPIAAEGEAIVSGEAHVDNVAPALLGGFTIARNSTVTTVDTTIPLVACLPEIAVSTRDARRVVPDSITMEEAVHTVGSAATLTVGMCQSNPALVGAGMDEHVVTPARAELVTGYDTVREAALTAGATGVTVSGAGPAILAVCKAERRRAVAAAMIDAFETADVEARAYQTCVSAGATLF</sequence>
<organism>
    <name type="scientific">Haloquadratum walsbyi (strain DSM 16790 / HBSQ001)</name>
    <dbReference type="NCBI Taxonomy" id="362976"/>
    <lineage>
        <taxon>Archaea</taxon>
        <taxon>Methanobacteriati</taxon>
        <taxon>Methanobacteriota</taxon>
        <taxon>Stenosarchaea group</taxon>
        <taxon>Halobacteria</taxon>
        <taxon>Halobacteriales</taxon>
        <taxon>Haloferacaceae</taxon>
        <taxon>Haloquadratum</taxon>
    </lineage>
</organism>
<reference key="1">
    <citation type="journal article" date="2006" name="BMC Genomics">
        <title>The genome of the square archaeon Haloquadratum walsbyi: life at the limits of water activity.</title>
        <authorList>
            <person name="Bolhuis H."/>
            <person name="Palm P."/>
            <person name="Wende A."/>
            <person name="Falb M."/>
            <person name="Rampp M."/>
            <person name="Rodriguez-Valera F."/>
            <person name="Pfeiffer F."/>
            <person name="Oesterhelt D."/>
        </authorList>
    </citation>
    <scope>NUCLEOTIDE SEQUENCE [LARGE SCALE GENOMIC DNA]</scope>
    <source>
        <strain>DSM 16790 / HBSQ001</strain>
    </source>
</reference>
<keyword id="KW-0028">Amino-acid biosynthesis</keyword>
<keyword id="KW-0067">ATP-binding</keyword>
<keyword id="KW-0963">Cytoplasm</keyword>
<keyword id="KW-0418">Kinase</keyword>
<keyword id="KW-0547">Nucleotide-binding</keyword>
<keyword id="KW-1185">Reference proteome</keyword>
<keyword id="KW-0791">Threonine biosynthesis</keyword>
<keyword id="KW-0808">Transferase</keyword>
<name>KHSE_HALWD</name>